<sequence>MSGNDARARVRSLPSTSSPLETRDSDEQESSSSQSQRGSRKRGPQRRATELPSAADLYVPSLPGLPDMATHPTHPLNIYAGMLPSYPGEGKVGGEGETGKDAKLYFLMAKARRNAGKERVIFWFNGGPGCSSFDGSLMEVGPFRTVPASETTTGMVEAKLVEGGWEEFATVVFVDQPPGTGYSYAATNGYLHDFDELSAHFIEFLQNFYTVFPELKGVDTYLAGESFAGQYIPFFADALINSAELPNFPLKGIAIGNGWIDPKEQYPGYVEFAYEKGLIDSGTPVSAAFVDLHKERADQMLTDQEAEEMEAALKRCQEEMDKYTDPFTTPVNIDHCGEVMDSVTRPFTQELNGKKVCMNVYDVRLVDDFPACGMNWPPDLPDVYTFLRQDEVISALHASSKETAWVECNNKVSYELNLKHSHMSAALLPSILEAGVPILMFAGAEDLICNYKGIERIVNGLEWGGEKGFANATSQEWYLNGTQVGTWQTSRGLSYAKIFDSSHMVGFDVPHVTNDMIMRFMDVDVSLLPGMISQWSSRIGDDERTMIHVGDAGEAGGVPLIKGGNTDWEAWYNAVFAFLVLGILVSIVGLYFYFRRKPVSYRSRIALKQRGRHRQSHDRDEGDTAERMPLGSERLELDDIERAEGYEFDDRDDEGYSGKGKGKGKELADDREEVMFALGDDDEDDRH</sequence>
<proteinExistence type="inferred from homology"/>
<dbReference type="EC" id="3.4.16.6"/>
<dbReference type="EMBL" id="CP000290">
    <property type="protein sequence ID" value="ADV22286.1"/>
    <property type="molecule type" value="Genomic_DNA"/>
</dbReference>
<dbReference type="RefSeq" id="XP_003194073.1">
    <property type="nucleotide sequence ID" value="XM_003194025.1"/>
</dbReference>
<dbReference type="SMR" id="E6R6G5"/>
<dbReference type="ESTHER" id="crygw-kex1">
    <property type="family name" value="Carboxypeptidase_S10"/>
</dbReference>
<dbReference type="MEROPS" id="S10.007"/>
<dbReference type="GlyCosmos" id="E6R6G5">
    <property type="glycosylation" value="2 sites, No reported glycans"/>
</dbReference>
<dbReference type="GeneID" id="10190080"/>
<dbReference type="KEGG" id="cgi:CGB_E0630W"/>
<dbReference type="VEuPathDB" id="FungiDB:CGB_E0630W"/>
<dbReference type="eggNOG" id="KOG1282">
    <property type="taxonomic scope" value="Eukaryota"/>
</dbReference>
<dbReference type="HOGENOM" id="CLU_008523_11_1_1"/>
<dbReference type="OrthoDB" id="443318at2759"/>
<dbReference type="Proteomes" id="UP000007805">
    <property type="component" value="Chromosome E"/>
</dbReference>
<dbReference type="GO" id="GO:0016020">
    <property type="term" value="C:membrane"/>
    <property type="evidence" value="ECO:0007669"/>
    <property type="project" value="UniProtKB-KW"/>
</dbReference>
<dbReference type="GO" id="GO:0005802">
    <property type="term" value="C:trans-Golgi network"/>
    <property type="evidence" value="ECO:0007669"/>
    <property type="project" value="TreeGrafter"/>
</dbReference>
<dbReference type="GO" id="GO:0004185">
    <property type="term" value="F:serine-type carboxypeptidase activity"/>
    <property type="evidence" value="ECO:0007669"/>
    <property type="project" value="UniProtKB-EC"/>
</dbReference>
<dbReference type="GO" id="GO:0006915">
    <property type="term" value="P:apoptotic process"/>
    <property type="evidence" value="ECO:0007669"/>
    <property type="project" value="UniProtKB-KW"/>
</dbReference>
<dbReference type="GO" id="GO:0006508">
    <property type="term" value="P:proteolysis"/>
    <property type="evidence" value="ECO:0007669"/>
    <property type="project" value="UniProtKB-KW"/>
</dbReference>
<dbReference type="Gene3D" id="3.40.50.1820">
    <property type="entry name" value="alpha/beta hydrolase"/>
    <property type="match status" value="1"/>
</dbReference>
<dbReference type="InterPro" id="IPR029058">
    <property type="entry name" value="AB_hydrolase_fold"/>
</dbReference>
<dbReference type="InterPro" id="IPR001563">
    <property type="entry name" value="Peptidase_S10"/>
</dbReference>
<dbReference type="PANTHER" id="PTHR11802:SF190">
    <property type="entry name" value="PHEROMONE-PROCESSING CARBOXYPEPTIDASE KEX1"/>
    <property type="match status" value="1"/>
</dbReference>
<dbReference type="PANTHER" id="PTHR11802">
    <property type="entry name" value="SERINE PROTEASE FAMILY S10 SERINE CARBOXYPEPTIDASE"/>
    <property type="match status" value="1"/>
</dbReference>
<dbReference type="Pfam" id="PF00450">
    <property type="entry name" value="Peptidase_S10"/>
    <property type="match status" value="1"/>
</dbReference>
<dbReference type="PRINTS" id="PR00724">
    <property type="entry name" value="CRBOXYPTASEC"/>
</dbReference>
<dbReference type="SUPFAM" id="SSF53474">
    <property type="entry name" value="alpha/beta-Hydrolases"/>
    <property type="match status" value="1"/>
</dbReference>
<protein>
    <recommendedName>
        <fullName>Pheromone-processing carboxypeptidase KEX1</fullName>
        <ecNumber>3.4.16.6</ecNumber>
    </recommendedName>
    <alternativeName>
        <fullName>Carboxypeptidase D</fullName>
    </alternativeName>
</protein>
<name>KEX1_CRYGW</name>
<gene>
    <name type="primary">KEX1</name>
    <name type="ordered locus">CGB_E0630W</name>
</gene>
<evidence type="ECO:0000250" key="1"/>
<evidence type="ECO:0000255" key="2"/>
<evidence type="ECO:0000256" key="3">
    <source>
        <dbReference type="SAM" id="MobiDB-lite"/>
    </source>
</evidence>
<evidence type="ECO:0000305" key="4"/>
<comment type="function">
    <text evidence="1">Protease with a carboxypeptidase B-like function involved in the C-terminal processing of the lysine and arginine residues from protein precursors. Promotes cell fusion and is involved in the programmed cell death (By similarity).</text>
</comment>
<comment type="catalytic activity">
    <reaction>
        <text>Preferential release of a C-terminal arginine or lysine residue.</text>
        <dbReference type="EC" id="3.4.16.6"/>
    </reaction>
</comment>
<comment type="subcellular location">
    <subcellularLocation>
        <location evidence="1">Golgi apparatus</location>
        <location evidence="1">trans-Golgi network membrane</location>
        <topology evidence="1">Single-pass type I membrane protein</topology>
    </subcellularLocation>
</comment>
<comment type="similarity">
    <text evidence="4">Belongs to the peptidase S10 family.</text>
</comment>
<organism>
    <name type="scientific">Cryptococcus gattii serotype B (strain WM276 / ATCC MYA-4071)</name>
    <name type="common">Filobasidiella gattii</name>
    <name type="synonym">Cryptococcus bacillisporus</name>
    <dbReference type="NCBI Taxonomy" id="367775"/>
    <lineage>
        <taxon>Eukaryota</taxon>
        <taxon>Fungi</taxon>
        <taxon>Dikarya</taxon>
        <taxon>Basidiomycota</taxon>
        <taxon>Agaricomycotina</taxon>
        <taxon>Tremellomycetes</taxon>
        <taxon>Tremellales</taxon>
        <taxon>Cryptococcaceae</taxon>
        <taxon>Cryptococcus</taxon>
        <taxon>Cryptococcus gattii species complex</taxon>
    </lineage>
</organism>
<accession>E6R6G5</accession>
<keyword id="KW-0053">Apoptosis</keyword>
<keyword id="KW-0121">Carboxypeptidase</keyword>
<keyword id="KW-0325">Glycoprotein</keyword>
<keyword id="KW-0333">Golgi apparatus</keyword>
<keyword id="KW-0378">Hydrolase</keyword>
<keyword id="KW-0472">Membrane</keyword>
<keyword id="KW-0645">Protease</keyword>
<keyword id="KW-0732">Signal</keyword>
<keyword id="KW-0812">Transmembrane</keyword>
<keyword id="KW-1133">Transmembrane helix</keyword>
<feature type="signal peptide" evidence="2">
    <location>
        <begin position="1"/>
        <end status="unknown"/>
    </location>
</feature>
<feature type="chain" id="PRO_0000411918" description="Pheromone-processing carboxypeptidase KEX1">
    <location>
        <begin status="unknown"/>
        <end position="687"/>
    </location>
</feature>
<feature type="topological domain" description="Lumenal" evidence="2">
    <location>
        <begin status="unknown"/>
        <end position="573"/>
    </location>
</feature>
<feature type="transmembrane region" description="Helical" evidence="2">
    <location>
        <begin position="574"/>
        <end position="594"/>
    </location>
</feature>
<feature type="topological domain" description="Cytoplasmic" evidence="2">
    <location>
        <begin position="595"/>
        <end position="687"/>
    </location>
</feature>
<feature type="region of interest" description="Disordered" evidence="3">
    <location>
        <begin position="1"/>
        <end position="55"/>
    </location>
</feature>
<feature type="region of interest" description="Disordered" evidence="3">
    <location>
        <begin position="610"/>
        <end position="671"/>
    </location>
</feature>
<feature type="compositionally biased region" description="Basic and acidic residues" evidence="3">
    <location>
        <begin position="617"/>
        <end position="626"/>
    </location>
</feature>
<feature type="compositionally biased region" description="Basic and acidic residues" evidence="3">
    <location>
        <begin position="633"/>
        <end position="645"/>
    </location>
</feature>
<feature type="compositionally biased region" description="Acidic residues" evidence="3">
    <location>
        <begin position="646"/>
        <end position="655"/>
    </location>
</feature>
<feature type="active site" evidence="1">
    <location>
        <position position="226"/>
    </location>
</feature>
<feature type="active site" evidence="1">
    <location>
        <position position="446"/>
    </location>
</feature>
<feature type="active site" evidence="1">
    <location>
        <position position="503"/>
    </location>
</feature>
<feature type="glycosylation site" description="N-linked (GlcNAc...) asparagine" evidence="2">
    <location>
        <position position="471"/>
    </location>
</feature>
<feature type="glycosylation site" description="N-linked (GlcNAc...) asparagine" evidence="2">
    <location>
        <position position="480"/>
    </location>
</feature>
<reference key="1">
    <citation type="journal article" date="2011" name="MBio">
        <title>Genome variation in Cryptococcus gattii, an emerging pathogen of immunocompetent hosts.</title>
        <authorList>
            <person name="D'Souza C.A."/>
            <person name="Kronstad J.W."/>
            <person name="Taylor G."/>
            <person name="Warren R."/>
            <person name="Yuen M."/>
            <person name="Hu G."/>
            <person name="Jung W.H."/>
            <person name="Sham A."/>
            <person name="Kidd S.E."/>
            <person name="Tangen K."/>
            <person name="Lee N."/>
            <person name="Zeilmaker T."/>
            <person name="Sawkins J."/>
            <person name="McVicker G."/>
            <person name="Shah S."/>
            <person name="Gnerre S."/>
            <person name="Griggs A."/>
            <person name="Zeng Q."/>
            <person name="Bartlett K."/>
            <person name="Li W."/>
            <person name="Wang X."/>
            <person name="Heitman J."/>
            <person name="Stajich J.E."/>
            <person name="Fraser J.A."/>
            <person name="Meyer W."/>
            <person name="Carter D."/>
            <person name="Schein J."/>
            <person name="Krzywinski M."/>
            <person name="Kwon-Chung K.J."/>
            <person name="Varma A."/>
            <person name="Wang J."/>
            <person name="Brunham R."/>
            <person name="Fyfe M."/>
            <person name="Ouellette B.F.F."/>
            <person name="Siddiqui A."/>
            <person name="Marra M."/>
            <person name="Jones S."/>
            <person name="Holt R."/>
            <person name="Birren B.W."/>
            <person name="Galagan J.E."/>
            <person name="Cuomo C.A."/>
        </authorList>
    </citation>
    <scope>NUCLEOTIDE SEQUENCE [LARGE SCALE GENOMIC DNA]</scope>
    <source>
        <strain>WM276 / ATCC MYA-4071</strain>
    </source>
</reference>